<reference key="1">
    <citation type="submission" date="2008-04" db="EMBL/GenBank/DDBJ databases">
        <title>Complete sequence of chromosome of Natranaerobius thermophilus JW/NM-WN-LF.</title>
        <authorList>
            <consortium name="US DOE Joint Genome Institute"/>
            <person name="Copeland A."/>
            <person name="Lucas S."/>
            <person name="Lapidus A."/>
            <person name="Glavina del Rio T."/>
            <person name="Dalin E."/>
            <person name="Tice H."/>
            <person name="Bruce D."/>
            <person name="Goodwin L."/>
            <person name="Pitluck S."/>
            <person name="Chertkov O."/>
            <person name="Brettin T."/>
            <person name="Detter J.C."/>
            <person name="Han C."/>
            <person name="Kuske C.R."/>
            <person name="Schmutz J."/>
            <person name="Larimer F."/>
            <person name="Land M."/>
            <person name="Hauser L."/>
            <person name="Kyrpides N."/>
            <person name="Lykidis A."/>
            <person name="Mesbah N.M."/>
            <person name="Wiegel J."/>
        </authorList>
    </citation>
    <scope>NUCLEOTIDE SEQUENCE [LARGE SCALE GENOMIC DNA]</scope>
    <source>
        <strain>ATCC BAA-1301 / DSM 18059 / JW/NM-WN-LF</strain>
    </source>
</reference>
<feature type="chain" id="PRO_1000194391" description="Ribosomal RNA small subunit methyltransferase A">
    <location>
        <begin position="1"/>
        <end position="302"/>
    </location>
</feature>
<feature type="binding site" evidence="1">
    <location>
        <position position="27"/>
    </location>
    <ligand>
        <name>S-adenosyl-L-methionine</name>
        <dbReference type="ChEBI" id="CHEBI:59789"/>
    </ligand>
</feature>
<feature type="binding site" evidence="1">
    <location>
        <position position="29"/>
    </location>
    <ligand>
        <name>S-adenosyl-L-methionine</name>
        <dbReference type="ChEBI" id="CHEBI:59789"/>
    </ligand>
</feature>
<feature type="binding site" evidence="1">
    <location>
        <position position="54"/>
    </location>
    <ligand>
        <name>S-adenosyl-L-methionine</name>
        <dbReference type="ChEBI" id="CHEBI:59789"/>
    </ligand>
</feature>
<feature type="binding site" evidence="1">
    <location>
        <position position="75"/>
    </location>
    <ligand>
        <name>S-adenosyl-L-methionine</name>
        <dbReference type="ChEBI" id="CHEBI:59789"/>
    </ligand>
</feature>
<feature type="binding site" evidence="1">
    <location>
        <position position="100"/>
    </location>
    <ligand>
        <name>S-adenosyl-L-methionine</name>
        <dbReference type="ChEBI" id="CHEBI:59789"/>
    </ligand>
</feature>
<feature type="binding site" evidence="1">
    <location>
        <position position="138"/>
    </location>
    <ligand>
        <name>S-adenosyl-L-methionine</name>
        <dbReference type="ChEBI" id="CHEBI:59789"/>
    </ligand>
</feature>
<comment type="function">
    <text evidence="1">Specifically dimethylates two adjacent adenosines (A1518 and A1519) in the loop of a conserved hairpin near the 3'-end of 16S rRNA in the 30S particle. May play a critical role in biogenesis of 30S subunits.</text>
</comment>
<comment type="catalytic activity">
    <reaction evidence="1">
        <text>adenosine(1518)/adenosine(1519) in 16S rRNA + 4 S-adenosyl-L-methionine = N(6)-dimethyladenosine(1518)/N(6)-dimethyladenosine(1519) in 16S rRNA + 4 S-adenosyl-L-homocysteine + 4 H(+)</text>
        <dbReference type="Rhea" id="RHEA:19609"/>
        <dbReference type="Rhea" id="RHEA-COMP:10232"/>
        <dbReference type="Rhea" id="RHEA-COMP:10233"/>
        <dbReference type="ChEBI" id="CHEBI:15378"/>
        <dbReference type="ChEBI" id="CHEBI:57856"/>
        <dbReference type="ChEBI" id="CHEBI:59789"/>
        <dbReference type="ChEBI" id="CHEBI:74411"/>
        <dbReference type="ChEBI" id="CHEBI:74493"/>
        <dbReference type="EC" id="2.1.1.182"/>
    </reaction>
</comment>
<comment type="subcellular location">
    <subcellularLocation>
        <location evidence="1">Cytoplasm</location>
    </subcellularLocation>
</comment>
<comment type="similarity">
    <text evidence="1">Belongs to the class I-like SAM-binding methyltransferase superfamily. rRNA adenine N(6)-methyltransferase family. RsmA subfamily.</text>
</comment>
<keyword id="KW-0963">Cytoplasm</keyword>
<keyword id="KW-0489">Methyltransferase</keyword>
<keyword id="KW-1185">Reference proteome</keyword>
<keyword id="KW-0694">RNA-binding</keyword>
<keyword id="KW-0698">rRNA processing</keyword>
<keyword id="KW-0949">S-adenosyl-L-methionine</keyword>
<keyword id="KW-0808">Transferase</keyword>
<evidence type="ECO:0000255" key="1">
    <source>
        <dbReference type="HAMAP-Rule" id="MF_00607"/>
    </source>
</evidence>
<dbReference type="EC" id="2.1.1.182" evidence="1"/>
<dbReference type="EMBL" id="CP001034">
    <property type="protein sequence ID" value="ACB83645.1"/>
    <property type="molecule type" value="Genomic_DNA"/>
</dbReference>
<dbReference type="RefSeq" id="WP_012446536.1">
    <property type="nucleotide sequence ID" value="NC_010718.1"/>
</dbReference>
<dbReference type="SMR" id="B2A3L9"/>
<dbReference type="FunCoup" id="B2A3L9">
    <property type="interactions" value="361"/>
</dbReference>
<dbReference type="STRING" id="457570.Nther_0046"/>
<dbReference type="KEGG" id="nth:Nther_0046"/>
<dbReference type="eggNOG" id="COG0030">
    <property type="taxonomic scope" value="Bacteria"/>
</dbReference>
<dbReference type="HOGENOM" id="CLU_041220_0_0_9"/>
<dbReference type="InParanoid" id="B2A3L9"/>
<dbReference type="OrthoDB" id="9814755at2"/>
<dbReference type="Proteomes" id="UP000001683">
    <property type="component" value="Chromosome"/>
</dbReference>
<dbReference type="GO" id="GO:0005829">
    <property type="term" value="C:cytosol"/>
    <property type="evidence" value="ECO:0007669"/>
    <property type="project" value="TreeGrafter"/>
</dbReference>
<dbReference type="GO" id="GO:0052908">
    <property type="term" value="F:16S rRNA (adenine(1518)-N(6)/adenine(1519)-N(6))-dimethyltransferase activity"/>
    <property type="evidence" value="ECO:0007669"/>
    <property type="project" value="UniProtKB-EC"/>
</dbReference>
<dbReference type="GO" id="GO:0003723">
    <property type="term" value="F:RNA binding"/>
    <property type="evidence" value="ECO:0007669"/>
    <property type="project" value="UniProtKB-KW"/>
</dbReference>
<dbReference type="CDD" id="cd02440">
    <property type="entry name" value="AdoMet_MTases"/>
    <property type="match status" value="1"/>
</dbReference>
<dbReference type="FunFam" id="3.40.50.150:FF:000023">
    <property type="entry name" value="Ribosomal RNA small subunit methyltransferase A"/>
    <property type="match status" value="1"/>
</dbReference>
<dbReference type="Gene3D" id="1.10.8.100">
    <property type="entry name" value="Ribosomal RNA adenine dimethylase-like, domain 2"/>
    <property type="match status" value="1"/>
</dbReference>
<dbReference type="Gene3D" id="3.40.50.150">
    <property type="entry name" value="Vaccinia Virus protein VP39"/>
    <property type="match status" value="1"/>
</dbReference>
<dbReference type="HAMAP" id="MF_00607">
    <property type="entry name" value="16SrRNA_methyltr_A"/>
    <property type="match status" value="1"/>
</dbReference>
<dbReference type="InterPro" id="IPR001737">
    <property type="entry name" value="KsgA/Erm"/>
</dbReference>
<dbReference type="InterPro" id="IPR023165">
    <property type="entry name" value="rRNA_Ade_diMease-like_C"/>
</dbReference>
<dbReference type="InterPro" id="IPR020596">
    <property type="entry name" value="rRNA_Ade_Mease_Trfase_CS"/>
</dbReference>
<dbReference type="InterPro" id="IPR020598">
    <property type="entry name" value="rRNA_Ade_methylase_Trfase_N"/>
</dbReference>
<dbReference type="InterPro" id="IPR011530">
    <property type="entry name" value="rRNA_adenine_dimethylase"/>
</dbReference>
<dbReference type="InterPro" id="IPR029063">
    <property type="entry name" value="SAM-dependent_MTases_sf"/>
</dbReference>
<dbReference type="NCBIfam" id="TIGR00755">
    <property type="entry name" value="ksgA"/>
    <property type="match status" value="1"/>
</dbReference>
<dbReference type="PANTHER" id="PTHR11727">
    <property type="entry name" value="DIMETHYLADENOSINE TRANSFERASE"/>
    <property type="match status" value="1"/>
</dbReference>
<dbReference type="PANTHER" id="PTHR11727:SF7">
    <property type="entry name" value="DIMETHYLADENOSINE TRANSFERASE-RELATED"/>
    <property type="match status" value="1"/>
</dbReference>
<dbReference type="Pfam" id="PF00398">
    <property type="entry name" value="RrnaAD"/>
    <property type="match status" value="1"/>
</dbReference>
<dbReference type="SMART" id="SM00650">
    <property type="entry name" value="rADc"/>
    <property type="match status" value="1"/>
</dbReference>
<dbReference type="SUPFAM" id="SSF53335">
    <property type="entry name" value="S-adenosyl-L-methionine-dependent methyltransferases"/>
    <property type="match status" value="1"/>
</dbReference>
<dbReference type="PROSITE" id="PS01131">
    <property type="entry name" value="RRNA_A_DIMETH"/>
    <property type="match status" value="1"/>
</dbReference>
<dbReference type="PROSITE" id="PS51689">
    <property type="entry name" value="SAM_RNA_A_N6_MT"/>
    <property type="match status" value="1"/>
</dbReference>
<gene>
    <name evidence="1" type="primary">rsmA</name>
    <name evidence="1" type="synonym">ksgA</name>
    <name type="ordered locus">Nther_0046</name>
</gene>
<name>RSMA_NATTJ</name>
<proteinExistence type="inferred from homology"/>
<protein>
    <recommendedName>
        <fullName evidence="1">Ribosomal RNA small subunit methyltransferase A</fullName>
        <ecNumber evidence="1">2.1.1.182</ecNumber>
    </recommendedName>
    <alternativeName>
        <fullName evidence="1">16S rRNA (adenine(1518)-N(6)/adenine(1519)-N(6))-dimethyltransferase</fullName>
    </alternativeName>
    <alternativeName>
        <fullName evidence="1">16S rRNA dimethyladenosine transferase</fullName>
    </alternativeName>
    <alternativeName>
        <fullName evidence="1">16S rRNA dimethylase</fullName>
    </alternativeName>
    <alternativeName>
        <fullName evidence="1">S-adenosylmethionine-6-N', N'-adenosyl(rRNA) dimethyltransferase</fullName>
    </alternativeName>
</protein>
<sequence length="302" mass="34317">MNLFSPKEVSQLLKRYEIHPKKSLGQNFLVDGNIIQKIIAAAELKEQDIVLEIGPGLGTLTRDMSFYVNEIFAIELDQRMIDILQETVGSCDNVNIIHNDALKLDYQELISDFIEFSPAQLQCKSKQINPKNLKAVSNLPYYIASPLVLKLAKEKVPLSVMVLMVQREVADRFTASPGSKNYGAVTVLLDCFYEVEGVFNVPKTVFYPQPRVESQVVKLTKRSEAKINDDYQEDFIKFVNQAFNSRRKTLVNNILSIFTGEKSELSQILENNGFSAGIRGEQLTVDEFAQIFKIIYNRIKYS</sequence>
<accession>B2A3L9</accession>
<organism>
    <name type="scientific">Natranaerobius thermophilus (strain ATCC BAA-1301 / DSM 18059 / JW/NM-WN-LF)</name>
    <dbReference type="NCBI Taxonomy" id="457570"/>
    <lineage>
        <taxon>Bacteria</taxon>
        <taxon>Bacillati</taxon>
        <taxon>Bacillota</taxon>
        <taxon>Clostridia</taxon>
        <taxon>Natranaerobiales</taxon>
        <taxon>Natranaerobiaceae</taxon>
        <taxon>Natranaerobius</taxon>
    </lineage>
</organism>